<reference key="1">
    <citation type="journal article" date="2004" name="Nat. Genet.">
        <title>Reductive evolution suggested from the complete genome sequence of a plant-pathogenic phytoplasma.</title>
        <authorList>
            <person name="Oshima K."/>
            <person name="Kakizawa S."/>
            <person name="Nishigawa H."/>
            <person name="Jung H.-Y."/>
            <person name="Wei W."/>
            <person name="Suzuki S."/>
            <person name="Arashida R."/>
            <person name="Nakata D."/>
            <person name="Miyata S."/>
            <person name="Ugaki M."/>
            <person name="Namba S."/>
        </authorList>
    </citation>
    <scope>NUCLEOTIDE SEQUENCE [LARGE SCALE GENOMIC DNA]</scope>
    <source>
        <strain>OY-M</strain>
    </source>
</reference>
<sequence>MARQFSLEKTRNIGIIAHIDAGKTTTTERILFHTGKIHKIGETHDGASQMDWMEQEQERGITITSAATTAFWKDHRINIIDTPGHVDFTVEVSRSLRVLDGAVTVIDAQAGVEPQTETVWRQASEYKVPRVIFVNKMDKVGADFAYAIETLKQRLGVHASAIQWPIGSENDFNGIIDLVEMNAFEYDNTSPETGKVVPIPSDLESITQTKRNELIETLSTLDEELMMYYLEEKPISSEMLKNSIRKATLQASFFPVLCGSSFKNKGVVKMLDAIVDYLPAPCDVAAIVGFDSDNQEIVRTGLDEEPFIALAFKVMTDPYVGKLTFFRIYSGSVKAGSYVTNTTKGTKERFGRLLQMHANSREEVKEAYTGDILAVVGLKATTTGDTLASEGQTIVLESMNFPEPVIEIAVEPKTKADQDKMGIALAKLAEEDPTFKVFSNHETGQTIIAGMGELHLDIIIERLKREFKVQANVTEPQVAYRETITQETETEGKFIRQSGGRGQYGHVWMRFEPNPGKGFEFVNKIVGGVVPREYVPAVQKGIQEALAGGILAGYQIIDVKATLFDGSYHDVDSSEMAFKIAASMALKETKTKGNPVILEPIMDVEVVTPNDYVGNVIGDLTSRRGRLENQESRANAVAIRAFVPLSEMFGYATVLRSNTQGRATFIMQFAKYEKAPKSITEEIIKKRA</sequence>
<comment type="function">
    <text evidence="1">Catalyzes the GTP-dependent ribosomal translocation step during translation elongation. During this step, the ribosome changes from the pre-translocational (PRE) to the post-translocational (POST) state as the newly formed A-site-bound peptidyl-tRNA and P-site-bound deacylated tRNA move to the P and E sites, respectively. Catalyzes the coordinated movement of the two tRNA molecules, the mRNA and conformational changes in the ribosome.</text>
</comment>
<comment type="subcellular location">
    <subcellularLocation>
        <location evidence="1">Cytoplasm</location>
    </subcellularLocation>
</comment>
<comment type="similarity">
    <text evidence="1">Belongs to the TRAFAC class translation factor GTPase superfamily. Classic translation factor GTPase family. EF-G/EF-2 subfamily.</text>
</comment>
<accession>Q6YQV9</accession>
<gene>
    <name evidence="1" type="primary">fusA</name>
    <name type="ordered locus">PAM_264</name>
</gene>
<evidence type="ECO:0000255" key="1">
    <source>
        <dbReference type="HAMAP-Rule" id="MF_00054"/>
    </source>
</evidence>
<feature type="chain" id="PRO_0000091172" description="Elongation factor G">
    <location>
        <begin position="1"/>
        <end position="688"/>
    </location>
</feature>
<feature type="domain" description="tr-type G">
    <location>
        <begin position="8"/>
        <end position="282"/>
    </location>
</feature>
<feature type="binding site" evidence="1">
    <location>
        <begin position="17"/>
        <end position="24"/>
    </location>
    <ligand>
        <name>GTP</name>
        <dbReference type="ChEBI" id="CHEBI:37565"/>
    </ligand>
</feature>
<feature type="binding site" evidence="1">
    <location>
        <begin position="81"/>
        <end position="85"/>
    </location>
    <ligand>
        <name>GTP</name>
        <dbReference type="ChEBI" id="CHEBI:37565"/>
    </ligand>
</feature>
<feature type="binding site" evidence="1">
    <location>
        <begin position="135"/>
        <end position="138"/>
    </location>
    <ligand>
        <name>GTP</name>
        <dbReference type="ChEBI" id="CHEBI:37565"/>
    </ligand>
</feature>
<organism>
    <name type="scientific">Onion yellows phytoplasma (strain OY-M)</name>
    <dbReference type="NCBI Taxonomy" id="262768"/>
    <lineage>
        <taxon>Bacteria</taxon>
        <taxon>Bacillati</taxon>
        <taxon>Mycoplasmatota</taxon>
        <taxon>Mollicutes</taxon>
        <taxon>Acholeplasmatales</taxon>
        <taxon>Acholeplasmataceae</taxon>
        <taxon>Candidatus Phytoplasma</taxon>
        <taxon>16SrI (Aster yellows group)</taxon>
    </lineage>
</organism>
<name>EFG_ONYPE</name>
<proteinExistence type="inferred from homology"/>
<protein>
    <recommendedName>
        <fullName evidence="1">Elongation factor G</fullName>
        <shortName evidence="1">EF-G</shortName>
    </recommendedName>
</protein>
<dbReference type="EMBL" id="AP006628">
    <property type="protein sequence ID" value="BAD04349.1"/>
    <property type="molecule type" value="Genomic_DNA"/>
</dbReference>
<dbReference type="SMR" id="Q6YQV9"/>
<dbReference type="STRING" id="262768.PAM_264"/>
<dbReference type="KEGG" id="poy:PAM_264"/>
<dbReference type="eggNOG" id="COG0480">
    <property type="taxonomic scope" value="Bacteria"/>
</dbReference>
<dbReference type="HOGENOM" id="CLU_002794_4_1_14"/>
<dbReference type="BioCyc" id="OYEL262768:G1G26-321-MONOMER"/>
<dbReference type="Proteomes" id="UP000002523">
    <property type="component" value="Chromosome"/>
</dbReference>
<dbReference type="GO" id="GO:0005737">
    <property type="term" value="C:cytoplasm"/>
    <property type="evidence" value="ECO:0007669"/>
    <property type="project" value="UniProtKB-SubCell"/>
</dbReference>
<dbReference type="GO" id="GO:0005525">
    <property type="term" value="F:GTP binding"/>
    <property type="evidence" value="ECO:0007669"/>
    <property type="project" value="UniProtKB-UniRule"/>
</dbReference>
<dbReference type="GO" id="GO:0003924">
    <property type="term" value="F:GTPase activity"/>
    <property type="evidence" value="ECO:0007669"/>
    <property type="project" value="InterPro"/>
</dbReference>
<dbReference type="GO" id="GO:0003746">
    <property type="term" value="F:translation elongation factor activity"/>
    <property type="evidence" value="ECO:0007669"/>
    <property type="project" value="UniProtKB-UniRule"/>
</dbReference>
<dbReference type="GO" id="GO:0032790">
    <property type="term" value="P:ribosome disassembly"/>
    <property type="evidence" value="ECO:0007669"/>
    <property type="project" value="TreeGrafter"/>
</dbReference>
<dbReference type="CDD" id="cd01886">
    <property type="entry name" value="EF-G"/>
    <property type="match status" value="1"/>
</dbReference>
<dbReference type="CDD" id="cd16262">
    <property type="entry name" value="EFG_III"/>
    <property type="match status" value="1"/>
</dbReference>
<dbReference type="CDD" id="cd01434">
    <property type="entry name" value="EFG_mtEFG1_IV"/>
    <property type="match status" value="1"/>
</dbReference>
<dbReference type="CDD" id="cd03713">
    <property type="entry name" value="EFG_mtEFG_C"/>
    <property type="match status" value="1"/>
</dbReference>
<dbReference type="CDD" id="cd04088">
    <property type="entry name" value="EFG_mtEFG_II"/>
    <property type="match status" value="1"/>
</dbReference>
<dbReference type="FunFam" id="2.40.30.10:FF:000006">
    <property type="entry name" value="Elongation factor G"/>
    <property type="match status" value="1"/>
</dbReference>
<dbReference type="FunFam" id="3.30.230.10:FF:000003">
    <property type="entry name" value="Elongation factor G"/>
    <property type="match status" value="1"/>
</dbReference>
<dbReference type="FunFam" id="3.30.70.240:FF:000001">
    <property type="entry name" value="Elongation factor G"/>
    <property type="match status" value="1"/>
</dbReference>
<dbReference type="FunFam" id="3.30.70.870:FF:000001">
    <property type="entry name" value="Elongation factor G"/>
    <property type="match status" value="1"/>
</dbReference>
<dbReference type="FunFam" id="3.40.50.300:FF:000029">
    <property type="entry name" value="Elongation factor G"/>
    <property type="match status" value="1"/>
</dbReference>
<dbReference type="Gene3D" id="3.30.230.10">
    <property type="match status" value="1"/>
</dbReference>
<dbReference type="Gene3D" id="3.30.70.240">
    <property type="match status" value="1"/>
</dbReference>
<dbReference type="Gene3D" id="3.30.70.870">
    <property type="entry name" value="Elongation Factor G (Translational Gtpase), domain 3"/>
    <property type="match status" value="1"/>
</dbReference>
<dbReference type="Gene3D" id="3.40.50.300">
    <property type="entry name" value="P-loop containing nucleotide triphosphate hydrolases"/>
    <property type="match status" value="1"/>
</dbReference>
<dbReference type="Gene3D" id="2.40.30.10">
    <property type="entry name" value="Translation factors"/>
    <property type="match status" value="1"/>
</dbReference>
<dbReference type="HAMAP" id="MF_00054_B">
    <property type="entry name" value="EF_G_EF_2_B"/>
    <property type="match status" value="1"/>
</dbReference>
<dbReference type="InterPro" id="IPR053905">
    <property type="entry name" value="EF-G-like_DII"/>
</dbReference>
<dbReference type="InterPro" id="IPR041095">
    <property type="entry name" value="EFG_II"/>
</dbReference>
<dbReference type="InterPro" id="IPR009022">
    <property type="entry name" value="EFG_III"/>
</dbReference>
<dbReference type="InterPro" id="IPR035647">
    <property type="entry name" value="EFG_III/V"/>
</dbReference>
<dbReference type="InterPro" id="IPR047872">
    <property type="entry name" value="EFG_IV"/>
</dbReference>
<dbReference type="InterPro" id="IPR035649">
    <property type="entry name" value="EFG_V"/>
</dbReference>
<dbReference type="InterPro" id="IPR000640">
    <property type="entry name" value="EFG_V-like"/>
</dbReference>
<dbReference type="InterPro" id="IPR031157">
    <property type="entry name" value="G_TR_CS"/>
</dbReference>
<dbReference type="InterPro" id="IPR027417">
    <property type="entry name" value="P-loop_NTPase"/>
</dbReference>
<dbReference type="InterPro" id="IPR020568">
    <property type="entry name" value="Ribosomal_Su5_D2-typ_SF"/>
</dbReference>
<dbReference type="InterPro" id="IPR014721">
    <property type="entry name" value="Ribsml_uS5_D2-typ_fold_subgr"/>
</dbReference>
<dbReference type="InterPro" id="IPR005225">
    <property type="entry name" value="Small_GTP-bd"/>
</dbReference>
<dbReference type="InterPro" id="IPR000795">
    <property type="entry name" value="T_Tr_GTP-bd_dom"/>
</dbReference>
<dbReference type="InterPro" id="IPR009000">
    <property type="entry name" value="Transl_B-barrel_sf"/>
</dbReference>
<dbReference type="InterPro" id="IPR004540">
    <property type="entry name" value="Transl_elong_EFG/EF2"/>
</dbReference>
<dbReference type="InterPro" id="IPR005517">
    <property type="entry name" value="Transl_elong_EFG/EF2_IV"/>
</dbReference>
<dbReference type="NCBIfam" id="TIGR00484">
    <property type="entry name" value="EF-G"/>
    <property type="match status" value="1"/>
</dbReference>
<dbReference type="NCBIfam" id="NF009379">
    <property type="entry name" value="PRK12740.1-3"/>
    <property type="match status" value="1"/>
</dbReference>
<dbReference type="NCBIfam" id="NF009381">
    <property type="entry name" value="PRK12740.1-5"/>
    <property type="match status" value="1"/>
</dbReference>
<dbReference type="NCBIfam" id="TIGR00231">
    <property type="entry name" value="small_GTP"/>
    <property type="match status" value="1"/>
</dbReference>
<dbReference type="PANTHER" id="PTHR43261:SF1">
    <property type="entry name" value="RIBOSOME-RELEASING FACTOR 2, MITOCHONDRIAL"/>
    <property type="match status" value="1"/>
</dbReference>
<dbReference type="PANTHER" id="PTHR43261">
    <property type="entry name" value="TRANSLATION ELONGATION FACTOR G-RELATED"/>
    <property type="match status" value="1"/>
</dbReference>
<dbReference type="Pfam" id="PF22042">
    <property type="entry name" value="EF-G_D2"/>
    <property type="match status" value="1"/>
</dbReference>
<dbReference type="Pfam" id="PF00679">
    <property type="entry name" value="EFG_C"/>
    <property type="match status" value="1"/>
</dbReference>
<dbReference type="Pfam" id="PF14492">
    <property type="entry name" value="EFG_III"/>
    <property type="match status" value="1"/>
</dbReference>
<dbReference type="Pfam" id="PF03764">
    <property type="entry name" value="EFG_IV"/>
    <property type="match status" value="1"/>
</dbReference>
<dbReference type="Pfam" id="PF00009">
    <property type="entry name" value="GTP_EFTU"/>
    <property type="match status" value="1"/>
</dbReference>
<dbReference type="PRINTS" id="PR00315">
    <property type="entry name" value="ELONGATNFCT"/>
</dbReference>
<dbReference type="SMART" id="SM00838">
    <property type="entry name" value="EFG_C"/>
    <property type="match status" value="1"/>
</dbReference>
<dbReference type="SMART" id="SM00889">
    <property type="entry name" value="EFG_IV"/>
    <property type="match status" value="1"/>
</dbReference>
<dbReference type="SUPFAM" id="SSF54980">
    <property type="entry name" value="EF-G C-terminal domain-like"/>
    <property type="match status" value="2"/>
</dbReference>
<dbReference type="SUPFAM" id="SSF52540">
    <property type="entry name" value="P-loop containing nucleoside triphosphate hydrolases"/>
    <property type="match status" value="1"/>
</dbReference>
<dbReference type="SUPFAM" id="SSF54211">
    <property type="entry name" value="Ribosomal protein S5 domain 2-like"/>
    <property type="match status" value="1"/>
</dbReference>
<dbReference type="SUPFAM" id="SSF50447">
    <property type="entry name" value="Translation proteins"/>
    <property type="match status" value="1"/>
</dbReference>
<dbReference type="PROSITE" id="PS00301">
    <property type="entry name" value="G_TR_1"/>
    <property type="match status" value="1"/>
</dbReference>
<dbReference type="PROSITE" id="PS51722">
    <property type="entry name" value="G_TR_2"/>
    <property type="match status" value="1"/>
</dbReference>
<keyword id="KW-0963">Cytoplasm</keyword>
<keyword id="KW-0251">Elongation factor</keyword>
<keyword id="KW-0342">GTP-binding</keyword>
<keyword id="KW-0547">Nucleotide-binding</keyword>
<keyword id="KW-0648">Protein biosynthesis</keyword>